<organism>
    <name type="scientific">Escherichia coli (strain 55989 / EAEC)</name>
    <dbReference type="NCBI Taxonomy" id="585055"/>
    <lineage>
        <taxon>Bacteria</taxon>
        <taxon>Pseudomonadati</taxon>
        <taxon>Pseudomonadota</taxon>
        <taxon>Gammaproteobacteria</taxon>
        <taxon>Enterobacterales</taxon>
        <taxon>Enterobacteriaceae</taxon>
        <taxon>Escherichia</taxon>
    </lineage>
</organism>
<evidence type="ECO:0000255" key="1">
    <source>
        <dbReference type="HAMAP-Rule" id="MF_00096"/>
    </source>
</evidence>
<gene>
    <name evidence="1" type="primary">mutS</name>
    <name type="ordered locus">EC55989_3000</name>
</gene>
<comment type="function">
    <text evidence="1">This protein is involved in the repair of mismatches in DNA. It is possible that it carries out the mismatch recognition step. This protein has a weak ATPase activity.</text>
</comment>
<comment type="similarity">
    <text evidence="1">Belongs to the DNA mismatch repair MutS family.</text>
</comment>
<accession>B7LEE7</accession>
<proteinExistence type="inferred from homology"/>
<keyword id="KW-0067">ATP-binding</keyword>
<keyword id="KW-0227">DNA damage</keyword>
<keyword id="KW-0234">DNA repair</keyword>
<keyword id="KW-0238">DNA-binding</keyword>
<keyword id="KW-0547">Nucleotide-binding</keyword>
<keyword id="KW-1185">Reference proteome</keyword>
<dbReference type="EMBL" id="CU928145">
    <property type="protein sequence ID" value="CAU98884.1"/>
    <property type="molecule type" value="Genomic_DNA"/>
</dbReference>
<dbReference type="RefSeq" id="WP_001272924.1">
    <property type="nucleotide sequence ID" value="NC_011748.1"/>
</dbReference>
<dbReference type="SMR" id="B7LEE7"/>
<dbReference type="GeneID" id="93779275"/>
<dbReference type="KEGG" id="eck:EC55989_3000"/>
<dbReference type="HOGENOM" id="CLU_002472_4_0_6"/>
<dbReference type="Proteomes" id="UP000000746">
    <property type="component" value="Chromosome"/>
</dbReference>
<dbReference type="GO" id="GO:0005829">
    <property type="term" value="C:cytosol"/>
    <property type="evidence" value="ECO:0007669"/>
    <property type="project" value="TreeGrafter"/>
</dbReference>
<dbReference type="GO" id="GO:0005524">
    <property type="term" value="F:ATP binding"/>
    <property type="evidence" value="ECO:0007669"/>
    <property type="project" value="UniProtKB-UniRule"/>
</dbReference>
<dbReference type="GO" id="GO:0140664">
    <property type="term" value="F:ATP-dependent DNA damage sensor activity"/>
    <property type="evidence" value="ECO:0007669"/>
    <property type="project" value="InterPro"/>
</dbReference>
<dbReference type="GO" id="GO:0003684">
    <property type="term" value="F:damaged DNA binding"/>
    <property type="evidence" value="ECO:0007669"/>
    <property type="project" value="UniProtKB-UniRule"/>
</dbReference>
<dbReference type="GO" id="GO:0030983">
    <property type="term" value="F:mismatched DNA binding"/>
    <property type="evidence" value="ECO:0007669"/>
    <property type="project" value="InterPro"/>
</dbReference>
<dbReference type="GO" id="GO:0006298">
    <property type="term" value="P:mismatch repair"/>
    <property type="evidence" value="ECO:0007669"/>
    <property type="project" value="UniProtKB-UniRule"/>
</dbReference>
<dbReference type="CDD" id="cd03284">
    <property type="entry name" value="ABC_MutS1"/>
    <property type="match status" value="1"/>
</dbReference>
<dbReference type="FunFam" id="1.10.1420.10:FF:000002">
    <property type="entry name" value="DNA mismatch repair protein MutS"/>
    <property type="match status" value="1"/>
</dbReference>
<dbReference type="FunFam" id="3.30.420.110:FF:000001">
    <property type="entry name" value="DNA mismatch repair protein MutS"/>
    <property type="match status" value="1"/>
</dbReference>
<dbReference type="FunFam" id="3.40.1170.10:FF:000001">
    <property type="entry name" value="DNA mismatch repair protein MutS"/>
    <property type="match status" value="1"/>
</dbReference>
<dbReference type="FunFam" id="3.40.50.300:FF:000283">
    <property type="entry name" value="DNA mismatch repair protein MutS"/>
    <property type="match status" value="1"/>
</dbReference>
<dbReference type="Gene3D" id="1.10.1420.10">
    <property type="match status" value="2"/>
</dbReference>
<dbReference type="Gene3D" id="6.10.140.430">
    <property type="match status" value="1"/>
</dbReference>
<dbReference type="Gene3D" id="3.40.1170.10">
    <property type="entry name" value="DNA repair protein MutS, domain I"/>
    <property type="match status" value="1"/>
</dbReference>
<dbReference type="Gene3D" id="3.30.420.110">
    <property type="entry name" value="MutS, connector domain"/>
    <property type="match status" value="1"/>
</dbReference>
<dbReference type="Gene3D" id="3.40.50.300">
    <property type="entry name" value="P-loop containing nucleotide triphosphate hydrolases"/>
    <property type="match status" value="1"/>
</dbReference>
<dbReference type="HAMAP" id="MF_00096">
    <property type="entry name" value="MutS"/>
    <property type="match status" value="1"/>
</dbReference>
<dbReference type="InterPro" id="IPR005748">
    <property type="entry name" value="DNA_mismatch_repair_MutS"/>
</dbReference>
<dbReference type="InterPro" id="IPR007695">
    <property type="entry name" value="DNA_mismatch_repair_MutS-lik_N"/>
</dbReference>
<dbReference type="InterPro" id="IPR017261">
    <property type="entry name" value="DNA_mismatch_repair_MutS/MSH"/>
</dbReference>
<dbReference type="InterPro" id="IPR000432">
    <property type="entry name" value="DNA_mismatch_repair_MutS_C"/>
</dbReference>
<dbReference type="InterPro" id="IPR007861">
    <property type="entry name" value="DNA_mismatch_repair_MutS_clamp"/>
</dbReference>
<dbReference type="InterPro" id="IPR007696">
    <property type="entry name" value="DNA_mismatch_repair_MutS_core"/>
</dbReference>
<dbReference type="InterPro" id="IPR016151">
    <property type="entry name" value="DNA_mismatch_repair_MutS_N"/>
</dbReference>
<dbReference type="InterPro" id="IPR036187">
    <property type="entry name" value="DNA_mismatch_repair_MutS_sf"/>
</dbReference>
<dbReference type="InterPro" id="IPR007860">
    <property type="entry name" value="DNA_mmatch_repair_MutS_con_dom"/>
</dbReference>
<dbReference type="InterPro" id="IPR045076">
    <property type="entry name" value="MutS"/>
</dbReference>
<dbReference type="InterPro" id="IPR036678">
    <property type="entry name" value="MutS_con_dom_sf"/>
</dbReference>
<dbReference type="InterPro" id="IPR027417">
    <property type="entry name" value="P-loop_NTPase"/>
</dbReference>
<dbReference type="NCBIfam" id="TIGR01070">
    <property type="entry name" value="mutS1"/>
    <property type="match status" value="1"/>
</dbReference>
<dbReference type="NCBIfam" id="NF003810">
    <property type="entry name" value="PRK05399.1"/>
    <property type="match status" value="1"/>
</dbReference>
<dbReference type="PANTHER" id="PTHR11361:SF34">
    <property type="entry name" value="DNA MISMATCH REPAIR PROTEIN MSH1, MITOCHONDRIAL"/>
    <property type="match status" value="1"/>
</dbReference>
<dbReference type="PANTHER" id="PTHR11361">
    <property type="entry name" value="DNA MISMATCH REPAIR PROTEIN MUTS FAMILY MEMBER"/>
    <property type="match status" value="1"/>
</dbReference>
<dbReference type="Pfam" id="PF01624">
    <property type="entry name" value="MutS_I"/>
    <property type="match status" value="1"/>
</dbReference>
<dbReference type="Pfam" id="PF05188">
    <property type="entry name" value="MutS_II"/>
    <property type="match status" value="1"/>
</dbReference>
<dbReference type="Pfam" id="PF05192">
    <property type="entry name" value="MutS_III"/>
    <property type="match status" value="1"/>
</dbReference>
<dbReference type="Pfam" id="PF05190">
    <property type="entry name" value="MutS_IV"/>
    <property type="match status" value="1"/>
</dbReference>
<dbReference type="Pfam" id="PF00488">
    <property type="entry name" value="MutS_V"/>
    <property type="match status" value="1"/>
</dbReference>
<dbReference type="PIRSF" id="PIRSF037677">
    <property type="entry name" value="DNA_mis_repair_Msh6"/>
    <property type="match status" value="1"/>
</dbReference>
<dbReference type="SMART" id="SM00534">
    <property type="entry name" value="MUTSac"/>
    <property type="match status" value="1"/>
</dbReference>
<dbReference type="SMART" id="SM00533">
    <property type="entry name" value="MUTSd"/>
    <property type="match status" value="1"/>
</dbReference>
<dbReference type="SUPFAM" id="SSF55271">
    <property type="entry name" value="DNA repair protein MutS, domain I"/>
    <property type="match status" value="1"/>
</dbReference>
<dbReference type="SUPFAM" id="SSF53150">
    <property type="entry name" value="DNA repair protein MutS, domain II"/>
    <property type="match status" value="1"/>
</dbReference>
<dbReference type="SUPFAM" id="SSF48334">
    <property type="entry name" value="DNA repair protein MutS, domain III"/>
    <property type="match status" value="1"/>
</dbReference>
<dbReference type="SUPFAM" id="SSF52540">
    <property type="entry name" value="P-loop containing nucleoside triphosphate hydrolases"/>
    <property type="match status" value="1"/>
</dbReference>
<dbReference type="PROSITE" id="PS00486">
    <property type="entry name" value="DNA_MISMATCH_REPAIR_2"/>
    <property type="match status" value="1"/>
</dbReference>
<sequence length="853" mass="95319">MSAIENFDAHTPMMQQYLRLKAQHPEILLFYRMGDFYELFYDDAKRASQLLDISLTKRGASAGEPIPMAGIPYHAVENYLAKLVNQGESVAICEQIGDPATSKGPVERKVVRIVTPGTISDEALLQERQDNLLAAIWQDSKGFGYATLDISSGRFRLSEPADRETMAAELQRTNPAELLYAEDFAEMSLIEGRRGLRRRPLWEFEIDTARQQLNLQFGTRDLVGFGVENAPRGLCAAGCLLQYAKDTQRTTLPHIRSITMEREQDSIIMDAATRRNLEITQNLAGGAENTLASVLDCTVTPMGSRMLKRWLHMPVRDTRVLLERQQTIGALQDFTAELQPVLRQVGDLERILARLALRTARPRDLARMRHAFQQLPELRAQLETVDSAPVQALREKMGEFAELRDLLERAIIDTPPVLVRDGGVIASGYNEELDEWRALADGATDYLERLEVRERERTGLDTLKVGFNAVHGYYIQISRGQSHLAPINYMRRQTLKNAERYIIPELKEYEDKVLTSKGKALALEKQLYEELFDLLLPHLEALQQSASALAELDVLVNLAERAYTLNYTCPTFIDKPGIRITEGRHPVVEQVLNEPFIANPLNLSPQRRMLIITGPNMGGKSTYMRQTALIALMAYIGSYVPAQKVEIGPIDRIFTRVGAADDLASGRSTFMVEMTETANILHNATEYSLVLMDEIGRGTSTYDGLSLAWACAENLANKIKALTLFATHYFELTQLPEKMEGVANVHLDALEHGDTIAFMHSVQDGAASKSYGLAVAALAGVPKEVIKRARQKLRELESISPNAAATQVDGTQMSLLSVPEETSPAVEALENLDPDSLTPRQALEWIYRLKSLV</sequence>
<feature type="chain" id="PRO_1000118682" description="DNA mismatch repair protein MutS">
    <location>
        <begin position="1"/>
        <end position="853"/>
    </location>
</feature>
<feature type="binding site" evidence="1">
    <location>
        <begin position="614"/>
        <end position="621"/>
    </location>
    <ligand>
        <name>ATP</name>
        <dbReference type="ChEBI" id="CHEBI:30616"/>
    </ligand>
</feature>
<protein>
    <recommendedName>
        <fullName evidence="1">DNA mismatch repair protein MutS</fullName>
    </recommendedName>
</protein>
<reference key="1">
    <citation type="journal article" date="2009" name="PLoS Genet.">
        <title>Organised genome dynamics in the Escherichia coli species results in highly diverse adaptive paths.</title>
        <authorList>
            <person name="Touchon M."/>
            <person name="Hoede C."/>
            <person name="Tenaillon O."/>
            <person name="Barbe V."/>
            <person name="Baeriswyl S."/>
            <person name="Bidet P."/>
            <person name="Bingen E."/>
            <person name="Bonacorsi S."/>
            <person name="Bouchier C."/>
            <person name="Bouvet O."/>
            <person name="Calteau A."/>
            <person name="Chiapello H."/>
            <person name="Clermont O."/>
            <person name="Cruveiller S."/>
            <person name="Danchin A."/>
            <person name="Diard M."/>
            <person name="Dossat C."/>
            <person name="Karoui M.E."/>
            <person name="Frapy E."/>
            <person name="Garry L."/>
            <person name="Ghigo J.M."/>
            <person name="Gilles A.M."/>
            <person name="Johnson J."/>
            <person name="Le Bouguenec C."/>
            <person name="Lescat M."/>
            <person name="Mangenot S."/>
            <person name="Martinez-Jehanne V."/>
            <person name="Matic I."/>
            <person name="Nassif X."/>
            <person name="Oztas S."/>
            <person name="Petit M.A."/>
            <person name="Pichon C."/>
            <person name="Rouy Z."/>
            <person name="Ruf C.S."/>
            <person name="Schneider D."/>
            <person name="Tourret J."/>
            <person name="Vacherie B."/>
            <person name="Vallenet D."/>
            <person name="Medigue C."/>
            <person name="Rocha E.P.C."/>
            <person name="Denamur E."/>
        </authorList>
    </citation>
    <scope>NUCLEOTIDE SEQUENCE [LARGE SCALE GENOMIC DNA]</scope>
    <source>
        <strain>55989 / EAEC</strain>
    </source>
</reference>
<name>MUTS_ECO55</name>